<name>RGP1_ARATH</name>
<accession>Q9SRT9</accession>
<accession>O22427</accession>
<accession>W8PVH6</accession>
<organism>
    <name type="scientific">Arabidopsis thaliana</name>
    <name type="common">Mouse-ear cress</name>
    <dbReference type="NCBI Taxonomy" id="3702"/>
    <lineage>
        <taxon>Eukaryota</taxon>
        <taxon>Viridiplantae</taxon>
        <taxon>Streptophyta</taxon>
        <taxon>Embryophyta</taxon>
        <taxon>Tracheophyta</taxon>
        <taxon>Spermatophyta</taxon>
        <taxon>Magnoliopsida</taxon>
        <taxon>eudicotyledons</taxon>
        <taxon>Gunneridae</taxon>
        <taxon>Pentapetalae</taxon>
        <taxon>rosids</taxon>
        <taxon>malvids</taxon>
        <taxon>Brassicales</taxon>
        <taxon>Brassicaceae</taxon>
        <taxon>Camelineae</taxon>
        <taxon>Arabidopsis</taxon>
    </lineage>
</organism>
<evidence type="ECO:0000250" key="1">
    <source>
        <dbReference type="UniProtKB" id="P80607"/>
    </source>
</evidence>
<evidence type="ECO:0000250" key="2">
    <source>
        <dbReference type="UniProtKB" id="Q8H8T0"/>
    </source>
</evidence>
<evidence type="ECO:0000250" key="3">
    <source>
        <dbReference type="UniProtKB" id="Q9LFW1"/>
    </source>
</evidence>
<evidence type="ECO:0000269" key="4">
    <source>
    </source>
</evidence>
<evidence type="ECO:0000269" key="5">
    <source>
    </source>
</evidence>
<evidence type="ECO:0000269" key="6">
    <source>
    </source>
</evidence>
<evidence type="ECO:0000303" key="7">
    <source>
    </source>
</evidence>
<evidence type="ECO:0000305" key="8"/>
<evidence type="ECO:0000312" key="9">
    <source>
        <dbReference type="Araport" id="AT3G02230"/>
    </source>
</evidence>
<evidence type="ECO:0000312" key="10">
    <source>
        <dbReference type="EMBL" id="AAF02115.1"/>
    </source>
</evidence>
<dbReference type="EC" id="5.4.99.30" evidence="5"/>
<dbReference type="EMBL" id="AF013627">
    <property type="protein sequence ID" value="AAC50000.1"/>
    <property type="molecule type" value="mRNA"/>
</dbReference>
<dbReference type="EMBL" id="AC009755">
    <property type="protein sequence ID" value="AAF02115.1"/>
    <property type="molecule type" value="Genomic_DNA"/>
</dbReference>
<dbReference type="EMBL" id="CP002686">
    <property type="protein sequence ID" value="AEE73781.1"/>
    <property type="molecule type" value="Genomic_DNA"/>
</dbReference>
<dbReference type="EMBL" id="BT002409">
    <property type="protein sequence ID" value="AAO00769.1"/>
    <property type="molecule type" value="mRNA"/>
</dbReference>
<dbReference type="EMBL" id="BT008841">
    <property type="protein sequence ID" value="AAP68280.1"/>
    <property type="molecule type" value="mRNA"/>
</dbReference>
<dbReference type="EMBL" id="KJ138846">
    <property type="protein sequence ID" value="AHL38786.1"/>
    <property type="molecule type" value="mRNA"/>
</dbReference>
<dbReference type="RefSeq" id="NP_186872.1">
    <property type="nucleotide sequence ID" value="NM_111090.4"/>
</dbReference>
<dbReference type="SMR" id="Q9SRT9"/>
<dbReference type="BioGRID" id="6566">
    <property type="interactions" value="4"/>
</dbReference>
<dbReference type="FunCoup" id="Q9SRT9">
    <property type="interactions" value="664"/>
</dbReference>
<dbReference type="IntAct" id="Q9SRT9">
    <property type="interactions" value="2"/>
</dbReference>
<dbReference type="STRING" id="3702.Q9SRT9"/>
<dbReference type="CAZy" id="GT75">
    <property type="family name" value="Glycosyltransferase Family 75"/>
</dbReference>
<dbReference type="GlyCosmos" id="Q9SRT9">
    <property type="glycosylation" value="1 site, No reported glycans"/>
</dbReference>
<dbReference type="iPTMnet" id="Q9SRT9"/>
<dbReference type="PaxDb" id="3702-AT3G02230.1"/>
<dbReference type="ProMEX" id="Q9SRT9"/>
<dbReference type="ProteomicsDB" id="236889"/>
<dbReference type="EnsemblPlants" id="AT3G02230.1">
    <property type="protein sequence ID" value="AT3G02230.1"/>
    <property type="gene ID" value="AT3G02230"/>
</dbReference>
<dbReference type="GeneID" id="821233"/>
<dbReference type="Gramene" id="AT3G02230.1">
    <property type="protein sequence ID" value="AT3G02230.1"/>
    <property type="gene ID" value="AT3G02230"/>
</dbReference>
<dbReference type="KEGG" id="ath:AT3G02230"/>
<dbReference type="Araport" id="AT3G02230"/>
<dbReference type="TAIR" id="AT3G02230">
    <property type="gene designation" value="RGP1"/>
</dbReference>
<dbReference type="eggNOG" id="ENOG502QSDP">
    <property type="taxonomic scope" value="Eukaryota"/>
</dbReference>
<dbReference type="HOGENOM" id="CLU_061976_0_0_1"/>
<dbReference type="InParanoid" id="Q9SRT9"/>
<dbReference type="OMA" id="ARMDEWD"/>
<dbReference type="OrthoDB" id="1021298at2759"/>
<dbReference type="PhylomeDB" id="Q9SRT9"/>
<dbReference type="BioCyc" id="ARA:AT3G02230-MONOMER"/>
<dbReference type="BioCyc" id="MetaCyc:AT3G02230-MONOMER"/>
<dbReference type="BRENDA" id="5.4.99.30">
    <property type="organism ID" value="399"/>
</dbReference>
<dbReference type="CD-CODE" id="4299E36E">
    <property type="entry name" value="Nucleolus"/>
</dbReference>
<dbReference type="PRO" id="PR:Q9SRT9"/>
<dbReference type="Proteomes" id="UP000006548">
    <property type="component" value="Chromosome 3"/>
</dbReference>
<dbReference type="ExpressionAtlas" id="Q9SRT9">
    <property type="expression patterns" value="baseline and differential"/>
</dbReference>
<dbReference type="GO" id="GO:0005829">
    <property type="term" value="C:cytosol"/>
    <property type="evidence" value="ECO:0000314"/>
    <property type="project" value="UniProtKB"/>
</dbReference>
<dbReference type="GO" id="GO:0022626">
    <property type="term" value="C:cytosolic ribosome"/>
    <property type="evidence" value="ECO:0007005"/>
    <property type="project" value="TAIR"/>
</dbReference>
<dbReference type="GO" id="GO:0005794">
    <property type="term" value="C:Golgi apparatus"/>
    <property type="evidence" value="ECO:0000314"/>
    <property type="project" value="UniProtKB"/>
</dbReference>
<dbReference type="GO" id="GO:0005795">
    <property type="term" value="C:Golgi stack"/>
    <property type="evidence" value="ECO:0000314"/>
    <property type="project" value="TAIR"/>
</dbReference>
<dbReference type="GO" id="GO:0000138">
    <property type="term" value="C:Golgi trans cisterna"/>
    <property type="evidence" value="ECO:0000314"/>
    <property type="project" value="TAIR"/>
</dbReference>
<dbReference type="GO" id="GO:0009505">
    <property type="term" value="C:plant-type cell wall"/>
    <property type="evidence" value="ECO:0007005"/>
    <property type="project" value="TAIR"/>
</dbReference>
<dbReference type="GO" id="GO:0000325">
    <property type="term" value="C:plant-type vacuole"/>
    <property type="evidence" value="ECO:0007005"/>
    <property type="project" value="TAIR"/>
</dbReference>
<dbReference type="GO" id="GO:0016760">
    <property type="term" value="F:cellulose synthase (UDP-forming) activity"/>
    <property type="evidence" value="ECO:0000250"/>
    <property type="project" value="TAIR"/>
</dbReference>
<dbReference type="GO" id="GO:0016866">
    <property type="term" value="F:intramolecular transferase activity"/>
    <property type="evidence" value="ECO:0000314"/>
    <property type="project" value="UniProtKB"/>
</dbReference>
<dbReference type="GO" id="GO:0003735">
    <property type="term" value="F:structural constituent of ribosome"/>
    <property type="evidence" value="ECO:0000314"/>
    <property type="project" value="CAFA"/>
</dbReference>
<dbReference type="GO" id="GO:0052691">
    <property type="term" value="F:UDP-arabinopyranose mutase activity"/>
    <property type="evidence" value="ECO:0000314"/>
    <property type="project" value="TAIR"/>
</dbReference>
<dbReference type="GO" id="GO:0071555">
    <property type="term" value="P:cell wall organization"/>
    <property type="evidence" value="ECO:0007669"/>
    <property type="project" value="UniProtKB-KW"/>
</dbReference>
<dbReference type="GO" id="GO:0009832">
    <property type="term" value="P:plant-type cell wall biogenesis"/>
    <property type="evidence" value="ECO:0000304"/>
    <property type="project" value="TAIR"/>
</dbReference>
<dbReference type="GO" id="GO:0071669">
    <property type="term" value="P:plant-type cell wall organization or biogenesis"/>
    <property type="evidence" value="ECO:0000315"/>
    <property type="project" value="UniProtKB"/>
</dbReference>
<dbReference type="GO" id="GO:0009555">
    <property type="term" value="P:pollen development"/>
    <property type="evidence" value="ECO:0000316"/>
    <property type="project" value="UniProtKB"/>
</dbReference>
<dbReference type="GO" id="GO:0033356">
    <property type="term" value="P:UDP-L-arabinose metabolic process"/>
    <property type="evidence" value="ECO:0000315"/>
    <property type="project" value="TAIR"/>
</dbReference>
<dbReference type="InterPro" id="IPR029044">
    <property type="entry name" value="Nucleotide-diphossugar_trans"/>
</dbReference>
<dbReference type="InterPro" id="IPR004901">
    <property type="entry name" value="RGP"/>
</dbReference>
<dbReference type="InterPro" id="IPR037595">
    <property type="entry name" value="RGP_fam"/>
</dbReference>
<dbReference type="PANTHER" id="PTHR31682:SF46">
    <property type="entry name" value="UDP-ARABINOPYRANOSE MUTASE 1"/>
    <property type="match status" value="1"/>
</dbReference>
<dbReference type="PANTHER" id="PTHR31682">
    <property type="entry name" value="UDP-ARABINOSE MUTASE"/>
    <property type="match status" value="1"/>
</dbReference>
<dbReference type="Pfam" id="PF03214">
    <property type="entry name" value="RGP"/>
    <property type="match status" value="1"/>
</dbReference>
<dbReference type="PIRSF" id="PIRSF016429">
    <property type="entry name" value="UPTG"/>
    <property type="match status" value="1"/>
</dbReference>
<dbReference type="SUPFAM" id="SSF53448">
    <property type="entry name" value="Nucleotide-diphospho-sugar transferases"/>
    <property type="match status" value="1"/>
</dbReference>
<proteinExistence type="evidence at protein level"/>
<reference key="1">
    <citation type="journal article" date="1998" name="Plant Physiol.">
        <title>Cloning and characterization of AtRGP1. A reversibly autoglycosylated arabidopsis protein implicated in cell wall biosynthesis.</title>
        <authorList>
            <person name="Delgado I.J."/>
            <person name="Wang Z."/>
            <person name="de Rocher A."/>
            <person name="Keegstra K."/>
            <person name="Raikhel N.V."/>
        </authorList>
    </citation>
    <scope>NUCLEOTIDE SEQUENCE [MRNA]</scope>
    <scope>TISSUE SPECIFICITY</scope>
    <scope>GLYCOSYLATION</scope>
</reference>
<reference key="2">
    <citation type="journal article" date="2000" name="Nature">
        <title>Sequence and analysis of chromosome 3 of the plant Arabidopsis thaliana.</title>
        <authorList>
            <person name="Salanoubat M."/>
            <person name="Lemcke K."/>
            <person name="Rieger M."/>
            <person name="Ansorge W."/>
            <person name="Unseld M."/>
            <person name="Fartmann B."/>
            <person name="Valle G."/>
            <person name="Bloecker H."/>
            <person name="Perez-Alonso M."/>
            <person name="Obermaier B."/>
            <person name="Delseny M."/>
            <person name="Boutry M."/>
            <person name="Grivell L.A."/>
            <person name="Mache R."/>
            <person name="Puigdomenech P."/>
            <person name="De Simone V."/>
            <person name="Choisne N."/>
            <person name="Artiguenave F."/>
            <person name="Robert C."/>
            <person name="Brottier P."/>
            <person name="Wincker P."/>
            <person name="Cattolico L."/>
            <person name="Weissenbach J."/>
            <person name="Saurin W."/>
            <person name="Quetier F."/>
            <person name="Schaefer M."/>
            <person name="Mueller-Auer S."/>
            <person name="Gabel C."/>
            <person name="Fuchs M."/>
            <person name="Benes V."/>
            <person name="Wurmbach E."/>
            <person name="Drzonek H."/>
            <person name="Erfle H."/>
            <person name="Jordan N."/>
            <person name="Bangert S."/>
            <person name="Wiedelmann R."/>
            <person name="Kranz H."/>
            <person name="Voss H."/>
            <person name="Holland R."/>
            <person name="Brandt P."/>
            <person name="Nyakatura G."/>
            <person name="Vezzi A."/>
            <person name="D'Angelo M."/>
            <person name="Pallavicini A."/>
            <person name="Toppo S."/>
            <person name="Simionati B."/>
            <person name="Conrad A."/>
            <person name="Hornischer K."/>
            <person name="Kauer G."/>
            <person name="Loehnert T.-H."/>
            <person name="Nordsiek G."/>
            <person name="Reichelt J."/>
            <person name="Scharfe M."/>
            <person name="Schoen O."/>
            <person name="Bargues M."/>
            <person name="Terol J."/>
            <person name="Climent J."/>
            <person name="Navarro P."/>
            <person name="Collado C."/>
            <person name="Perez-Perez A."/>
            <person name="Ottenwaelder B."/>
            <person name="Duchemin D."/>
            <person name="Cooke R."/>
            <person name="Laudie M."/>
            <person name="Berger-Llauro C."/>
            <person name="Purnelle B."/>
            <person name="Masuy D."/>
            <person name="de Haan M."/>
            <person name="Maarse A.C."/>
            <person name="Alcaraz J.-P."/>
            <person name="Cottet A."/>
            <person name="Casacuberta E."/>
            <person name="Monfort A."/>
            <person name="Argiriou A."/>
            <person name="Flores M."/>
            <person name="Liguori R."/>
            <person name="Vitale D."/>
            <person name="Mannhaupt G."/>
            <person name="Haase D."/>
            <person name="Schoof H."/>
            <person name="Rudd S."/>
            <person name="Zaccaria P."/>
            <person name="Mewes H.-W."/>
            <person name="Mayer K.F.X."/>
            <person name="Kaul S."/>
            <person name="Town C.D."/>
            <person name="Koo H.L."/>
            <person name="Tallon L.J."/>
            <person name="Jenkins J."/>
            <person name="Rooney T."/>
            <person name="Rizzo M."/>
            <person name="Walts A."/>
            <person name="Utterback T."/>
            <person name="Fujii C.Y."/>
            <person name="Shea T.P."/>
            <person name="Creasy T.H."/>
            <person name="Haas B."/>
            <person name="Maiti R."/>
            <person name="Wu D."/>
            <person name="Peterson J."/>
            <person name="Van Aken S."/>
            <person name="Pai G."/>
            <person name="Militscher J."/>
            <person name="Sellers P."/>
            <person name="Gill J.E."/>
            <person name="Feldblyum T.V."/>
            <person name="Preuss D."/>
            <person name="Lin X."/>
            <person name="Nierman W.C."/>
            <person name="Salzberg S.L."/>
            <person name="White O."/>
            <person name="Venter J.C."/>
            <person name="Fraser C.M."/>
            <person name="Kaneko T."/>
            <person name="Nakamura Y."/>
            <person name="Sato S."/>
            <person name="Kato T."/>
            <person name="Asamizu E."/>
            <person name="Sasamoto S."/>
            <person name="Kimura T."/>
            <person name="Idesawa K."/>
            <person name="Kawashima K."/>
            <person name="Kishida Y."/>
            <person name="Kiyokawa C."/>
            <person name="Kohara M."/>
            <person name="Matsumoto M."/>
            <person name="Matsuno A."/>
            <person name="Muraki A."/>
            <person name="Nakayama S."/>
            <person name="Nakazaki N."/>
            <person name="Shinpo S."/>
            <person name="Takeuchi C."/>
            <person name="Wada T."/>
            <person name="Watanabe A."/>
            <person name="Yamada M."/>
            <person name="Yasuda M."/>
            <person name="Tabata S."/>
        </authorList>
    </citation>
    <scope>NUCLEOTIDE SEQUENCE [LARGE SCALE GENOMIC DNA]</scope>
    <source>
        <strain>cv. Columbia</strain>
    </source>
</reference>
<reference key="3">
    <citation type="journal article" date="2017" name="Plant J.">
        <title>Araport11: a complete reannotation of the Arabidopsis thaliana reference genome.</title>
        <authorList>
            <person name="Cheng C.Y."/>
            <person name="Krishnakumar V."/>
            <person name="Chan A.P."/>
            <person name="Thibaud-Nissen F."/>
            <person name="Schobel S."/>
            <person name="Town C.D."/>
        </authorList>
    </citation>
    <scope>GENOME REANNOTATION</scope>
    <source>
        <strain>cv. Columbia</strain>
    </source>
</reference>
<reference key="4">
    <citation type="journal article" date="2003" name="Science">
        <title>Empirical analysis of transcriptional activity in the Arabidopsis genome.</title>
        <authorList>
            <person name="Yamada K."/>
            <person name="Lim J."/>
            <person name="Dale J.M."/>
            <person name="Chen H."/>
            <person name="Shinn P."/>
            <person name="Palm C.J."/>
            <person name="Southwick A.M."/>
            <person name="Wu H.C."/>
            <person name="Kim C.J."/>
            <person name="Nguyen M."/>
            <person name="Pham P.K."/>
            <person name="Cheuk R.F."/>
            <person name="Karlin-Newmann G."/>
            <person name="Liu S.X."/>
            <person name="Lam B."/>
            <person name="Sakano H."/>
            <person name="Wu T."/>
            <person name="Yu G."/>
            <person name="Miranda M."/>
            <person name="Quach H.L."/>
            <person name="Tripp M."/>
            <person name="Chang C.H."/>
            <person name="Lee J.M."/>
            <person name="Toriumi M.J."/>
            <person name="Chan M.M."/>
            <person name="Tang C.C."/>
            <person name="Onodera C.S."/>
            <person name="Deng J.M."/>
            <person name="Akiyama K."/>
            <person name="Ansari Y."/>
            <person name="Arakawa T."/>
            <person name="Banh J."/>
            <person name="Banno F."/>
            <person name="Bowser L."/>
            <person name="Brooks S.Y."/>
            <person name="Carninci P."/>
            <person name="Chao Q."/>
            <person name="Choy N."/>
            <person name="Enju A."/>
            <person name="Goldsmith A.D."/>
            <person name="Gurjal M."/>
            <person name="Hansen N.F."/>
            <person name="Hayashizaki Y."/>
            <person name="Johnson-Hopson C."/>
            <person name="Hsuan V.W."/>
            <person name="Iida K."/>
            <person name="Karnes M."/>
            <person name="Khan S."/>
            <person name="Koesema E."/>
            <person name="Ishida J."/>
            <person name="Jiang P.X."/>
            <person name="Jones T."/>
            <person name="Kawai J."/>
            <person name="Kamiya A."/>
            <person name="Meyers C."/>
            <person name="Nakajima M."/>
            <person name="Narusaka M."/>
            <person name="Seki M."/>
            <person name="Sakurai T."/>
            <person name="Satou M."/>
            <person name="Tamse R."/>
            <person name="Vaysberg M."/>
            <person name="Wallender E.K."/>
            <person name="Wong C."/>
            <person name="Yamamura Y."/>
            <person name="Yuan S."/>
            <person name="Shinozaki K."/>
            <person name="Davis R.W."/>
            <person name="Theologis A."/>
            <person name="Ecker J.R."/>
        </authorList>
    </citation>
    <scope>NUCLEOTIDE SEQUENCE [LARGE SCALE MRNA]</scope>
    <source>
        <strain>cv. Columbia</strain>
    </source>
</reference>
<reference key="5">
    <citation type="journal article" date="2014" name="Plant J.">
        <title>The plant glycosyltransferase clone collection for functional genomics.</title>
        <authorList>
            <person name="Lao J."/>
            <person name="Oikawa A."/>
            <person name="Bromley J.R."/>
            <person name="McInerney P."/>
            <person name="Suttangkakul A."/>
            <person name="Smith-Moritz A.M."/>
            <person name="Plahar H."/>
            <person name="Chiu T.-Y."/>
            <person name="Gonzalez Fernandez-Nino S.M.G."/>
            <person name="Ebert B."/>
            <person name="Yang F."/>
            <person name="Christiansen K.M."/>
            <person name="Hansen S.F."/>
            <person name="Stonebloom S."/>
            <person name="Adams P.D."/>
            <person name="Ronald P.C."/>
            <person name="Hillson N.J."/>
            <person name="Hadi M.Z."/>
            <person name="Vega-Sanchez M.E."/>
            <person name="Loque D."/>
            <person name="Scheller H.V."/>
            <person name="Heazlewood J.L."/>
        </authorList>
    </citation>
    <scope>NUCLEOTIDE SEQUENCE [LARGE SCALE MRNA]</scope>
</reference>
<reference key="6">
    <citation type="journal article" date="2006" name="Plant Physiol.">
        <title>Arabidopsis reversibly glycosylated polypeptides 1 and 2 are essential for pollen development.</title>
        <authorList>
            <person name="Drakakaki G."/>
            <person name="Zabotina O."/>
            <person name="Delgado I."/>
            <person name="Robert S."/>
            <person name="Keegstra K."/>
            <person name="Raikhel N."/>
        </authorList>
    </citation>
    <scope>FUNCTION</scope>
    <scope>SUBUNIT</scope>
    <scope>SUBCELLULAR LOCATION</scope>
    <scope>TISSUE SPECIFICITY</scope>
    <scope>DISRUPTION PHENOTYPE</scope>
</reference>
<reference key="7">
    <citation type="journal article" date="2007" name="Mol. Cell. Proteomics">
        <title>Multidimensional protein identification technology (MudPIT) analysis of ubiquitinated proteins in plants.</title>
        <authorList>
            <person name="Maor R."/>
            <person name="Jones A."/>
            <person name="Nuehse T.S."/>
            <person name="Studholme D.J."/>
            <person name="Peck S.C."/>
            <person name="Shirasu K."/>
        </authorList>
    </citation>
    <scope>IDENTIFICATION BY MASS SPECTROMETRY [LARGE SCALE ANALYSIS]</scope>
    <source>
        <strain>cv. Landsberg erecta</strain>
    </source>
</reference>
<reference key="8">
    <citation type="journal article" date="2011" name="Plant Cell">
        <title>The interconversion of UDP-L-arabinopyranose and UDP-L-arabinofuranose is indispensable for plant development in Arabidopsis.</title>
        <authorList>
            <person name="Rautengarten C."/>
            <person name="Ebert B."/>
            <person name="Herter T."/>
            <person name="Petzold C.J."/>
            <person name="Ishii T."/>
            <person name="Mukhopadhyay A."/>
            <person name="Usadel B."/>
            <person name="Scheller H.V."/>
        </authorList>
    </citation>
    <scope>FUNCTION</scope>
    <scope>CATALYTIC ACTIVITY</scope>
    <scope>SUBCELLULAR LOCATION</scope>
    <scope>TISSUE SPECIFICITY</scope>
    <scope>IDENTIFICATION BY MASS SPECTROMETRY</scope>
    <scope>DISRUPTION PHENOTYPE</scope>
</reference>
<comment type="function">
    <text evidence="4 5">UDP-L-arabinose mutase involved in the biosynthesis of cell wall non-cellulosic polysaccharides. Catalyzes the interconvertion of UDP-L-arabinopyranose (UDP-Arap) and UDP-L-arabinofuranose (UDP-Araf) in vitro. Preferentially catalyzes the formation of UDP-Arap from UDP-Araf. At thermodynamic equilibrium in vitro the ratio of the pyranose form over the furanose form is 95:5. Is not active on other UDP-sugars (UDP-Gal, UDP-Xyl, UDP-Glc, GDP-Man and GDP-Fuc) (PubMed:21478444). Functions redundantly with RGP2 and is essential for proper cell walls and pollen development. Probably involved in the formation of the pectocellulosic cell wall layer intine. Is probably active as heteromer in vivo (PubMed:17071651).</text>
</comment>
<comment type="catalytic activity">
    <reaction evidence="5">
        <text>UDP-beta-L-arabinofuranose = UDP-beta-L-arabinopyranose</text>
        <dbReference type="Rhea" id="RHEA:28350"/>
        <dbReference type="ChEBI" id="CHEBI:61457"/>
        <dbReference type="ChEBI" id="CHEBI:61463"/>
        <dbReference type="EC" id="5.4.99.30"/>
    </reaction>
</comment>
<comment type="cofactor">
    <cofactor evidence="2">
        <name>Mn(2+)</name>
        <dbReference type="ChEBI" id="CHEBI:29035"/>
    </cofactor>
    <cofactor evidence="2">
        <name>Mg(2+)</name>
        <dbReference type="ChEBI" id="CHEBI:18420"/>
    </cofactor>
</comment>
<comment type="subunit">
    <text evidence="4">Heteromers with RGP2, RGP3, RGP4 and RGP5.</text>
</comment>
<comment type="subcellular location">
    <subcellularLocation>
        <location>Cytoplasm</location>
        <location>Cytosol</location>
    </subcellularLocation>
    <subcellularLocation>
        <location>Golgi apparatus</location>
    </subcellularLocation>
    <text evidence="4 5">Soluble and associated with peripheral membrane and endomembrane system.</text>
</comment>
<comment type="tissue specificity">
    <text evidence="4 5 6">Predominantly expressed in shoot and root apical meristems. Expressed in epidermal cells of leaves, inflorescence stems and seed coat. Expressed in pollen.</text>
</comment>
<comment type="domain">
    <text evidence="2">The conserved DXD motif is involved in enzyme activity.</text>
</comment>
<comment type="PTM">
    <text evidence="6">Reversibly glycosylated in vitro by UDP-glucose, UDP-xylose and UDP-galactose, but not UDP-mannose.</text>
</comment>
<comment type="disruption phenotype">
    <text evidence="4 5">No visible phenotype under normal growth condition, but significant reduction in total cell wall arabinose. Rgp1 and rgp2 double mutant is male gametophyte lethal, with an arrest in pollen mitosis (PubMed:17071651). RNAi-mediated knockdown of both RGP1 and RGP2 causes severe developmental defects and strong reduction in total cell wall arabinose (PubMed:21478444).</text>
</comment>
<comment type="similarity">
    <text evidence="8">Belongs to the RGP family.</text>
</comment>
<gene>
    <name evidence="7" type="primary">RGP1</name>
    <name evidence="9" type="ordered locus">At3g02230</name>
    <name evidence="10" type="ORF">F14P3.12</name>
</gene>
<protein>
    <recommendedName>
        <fullName evidence="8">UDP-arabinopyranose mutase 1</fullName>
        <ecNumber evidence="5">5.4.99.30</ecNumber>
    </recommendedName>
    <alternativeName>
        <fullName evidence="7">Reversibly glycosylated polypeptide 1</fullName>
        <shortName evidence="7">AtRGP1</shortName>
    </alternativeName>
    <alternativeName>
        <fullName evidence="8">UDP-L-arabinose mutase 1</fullName>
    </alternativeName>
</protein>
<keyword id="KW-0007">Acetylation</keyword>
<keyword id="KW-0961">Cell wall biogenesis/degradation</keyword>
<keyword id="KW-0963">Cytoplasm</keyword>
<keyword id="KW-0325">Glycoprotein</keyword>
<keyword id="KW-0333">Golgi apparatus</keyword>
<keyword id="KW-0413">Isomerase</keyword>
<keyword id="KW-1185">Reference proteome</keyword>
<feature type="initiator methionine" description="Removed" evidence="3">
    <location>
        <position position="1"/>
    </location>
</feature>
<feature type="chain" id="PRO_0000410984" description="UDP-arabinopyranose mutase 1">
    <location>
        <begin position="2"/>
        <end position="357"/>
    </location>
</feature>
<feature type="short sequence motif" description="DXD motif" evidence="2">
    <location>
        <begin position="110"/>
        <end position="112"/>
    </location>
</feature>
<feature type="site" description="Required for activity" evidence="2">
    <location>
        <position position="158"/>
    </location>
</feature>
<feature type="site" description="Required for activity" evidence="2">
    <location>
        <position position="165"/>
    </location>
</feature>
<feature type="modified residue" description="N-acetylvaline" evidence="3">
    <location>
        <position position="2"/>
    </location>
</feature>
<feature type="glycosylation site" description="N-linked (Glc...) arginine" evidence="1">
    <location>
        <position position="158"/>
    </location>
</feature>
<feature type="sequence conflict" description="In Ref. 1; AAC50000." evidence="8" ref="1">
    <original>L</original>
    <variation>F</variation>
    <location>
        <position position="42"/>
    </location>
</feature>
<feature type="sequence conflict" description="In Ref. 1; AAC50000." evidence="8" ref="1">
    <original>F</original>
    <variation>Y</variation>
    <location>
        <position position="221"/>
    </location>
</feature>
<feature type="sequence conflict" description="In Ref. 1; AAC50000." evidence="8" ref="1">
    <original>A</original>
    <variation>P</variation>
    <location>
        <position position="303"/>
    </location>
</feature>
<sequence length="357" mass="40629">MVEPANTVGIPVNHIPLLKDELDIVIPTIRNLDFLEMWRPFLQPYHLIIVQDGDPSKTIAVPEGFDYELYNRNDINRILGPKASCISFKDSACRCFGYMVSKKKYIFTIDDDCFVAKDPSGKAVNALEQHIKNLLCPSTPFFFNTLYDPYREGADFVRGYPFSLREGVSTAVSHGLWLNIPDYDAPTQLVKPKERNTRYVDAVMTIPKGTLFPMCGMNLAFDRELIGPAMYFGLMGDGQPIGRYDDMWAGWCIKVICDHLGLGVKTGLPYIYHSKASNPFVNLKKEYKGIFWQEDIIPFFQSAKLTKEAVTVQQCYMELSKLVKEKLSPIDPYFDKLADAMVTWIEAWDELNPPTKA</sequence>